<gene>
    <name evidence="1" type="primary">nuoB2</name>
    <name type="ordered locus">THEYE_A1126</name>
</gene>
<name>NUOB2_THEYD</name>
<accession>B5YL35</accession>
<keyword id="KW-0004">4Fe-4S</keyword>
<keyword id="KW-0997">Cell inner membrane</keyword>
<keyword id="KW-1003">Cell membrane</keyword>
<keyword id="KW-0408">Iron</keyword>
<keyword id="KW-0411">Iron-sulfur</keyword>
<keyword id="KW-0472">Membrane</keyword>
<keyword id="KW-0479">Metal-binding</keyword>
<keyword id="KW-0520">NAD</keyword>
<keyword id="KW-0874">Quinone</keyword>
<keyword id="KW-1185">Reference proteome</keyword>
<keyword id="KW-1278">Translocase</keyword>
<keyword id="KW-0813">Transport</keyword>
<keyword id="KW-0830">Ubiquinone</keyword>
<reference key="1">
    <citation type="submission" date="2008-08" db="EMBL/GenBank/DDBJ databases">
        <title>The complete genome sequence of Thermodesulfovibrio yellowstonii strain ATCC 51303 / DSM 11347 / YP87.</title>
        <authorList>
            <person name="Dodson R.J."/>
            <person name="Durkin A.S."/>
            <person name="Wu M."/>
            <person name="Eisen J."/>
            <person name="Sutton G."/>
        </authorList>
    </citation>
    <scope>NUCLEOTIDE SEQUENCE [LARGE SCALE GENOMIC DNA]</scope>
    <source>
        <strain>ATCC 51303 / DSM 11347 / YP87</strain>
    </source>
</reference>
<protein>
    <recommendedName>
        <fullName evidence="1">NADH-quinone oxidoreductase subunit B 2</fullName>
        <ecNumber evidence="1">7.1.1.-</ecNumber>
    </recommendedName>
    <alternativeName>
        <fullName evidence="1">NADH dehydrogenase I subunit B 2</fullName>
    </alternativeName>
    <alternativeName>
        <fullName evidence="1">NDH-1 subunit B 2</fullName>
    </alternativeName>
</protein>
<dbReference type="EC" id="7.1.1.-" evidence="1"/>
<dbReference type="EMBL" id="CP001147">
    <property type="protein sequence ID" value="ACI20647.1"/>
    <property type="molecule type" value="Genomic_DNA"/>
</dbReference>
<dbReference type="RefSeq" id="WP_012545381.1">
    <property type="nucleotide sequence ID" value="NC_011296.1"/>
</dbReference>
<dbReference type="RefSeq" id="YP_002248950.1">
    <property type="nucleotide sequence ID" value="NC_011296.1"/>
</dbReference>
<dbReference type="SMR" id="B5YL35"/>
<dbReference type="FunCoup" id="B5YL35">
    <property type="interactions" value="282"/>
</dbReference>
<dbReference type="STRING" id="289376.THEYE_A1126"/>
<dbReference type="EnsemblBacteria" id="ACI20647">
    <property type="protein sequence ID" value="ACI20647"/>
    <property type="gene ID" value="THEYE_A1126"/>
</dbReference>
<dbReference type="KEGG" id="tye:THEYE_A1126"/>
<dbReference type="PATRIC" id="fig|289376.4.peg.1104"/>
<dbReference type="eggNOG" id="COG0377">
    <property type="taxonomic scope" value="Bacteria"/>
</dbReference>
<dbReference type="HOGENOM" id="CLU_055737_7_3_0"/>
<dbReference type="InParanoid" id="B5YL35"/>
<dbReference type="OrthoDB" id="9786737at2"/>
<dbReference type="Proteomes" id="UP000000718">
    <property type="component" value="Chromosome"/>
</dbReference>
<dbReference type="GO" id="GO:0005886">
    <property type="term" value="C:plasma membrane"/>
    <property type="evidence" value="ECO:0007669"/>
    <property type="project" value="UniProtKB-SubCell"/>
</dbReference>
<dbReference type="GO" id="GO:0045271">
    <property type="term" value="C:respiratory chain complex I"/>
    <property type="evidence" value="ECO:0000318"/>
    <property type="project" value="GO_Central"/>
</dbReference>
<dbReference type="GO" id="GO:0051539">
    <property type="term" value="F:4 iron, 4 sulfur cluster binding"/>
    <property type="evidence" value="ECO:0007669"/>
    <property type="project" value="UniProtKB-KW"/>
</dbReference>
<dbReference type="GO" id="GO:0005506">
    <property type="term" value="F:iron ion binding"/>
    <property type="evidence" value="ECO:0007669"/>
    <property type="project" value="UniProtKB-UniRule"/>
</dbReference>
<dbReference type="GO" id="GO:0008137">
    <property type="term" value="F:NADH dehydrogenase (ubiquinone) activity"/>
    <property type="evidence" value="ECO:0000318"/>
    <property type="project" value="GO_Central"/>
</dbReference>
<dbReference type="GO" id="GO:0050136">
    <property type="term" value="F:NADH:ubiquinone reductase (non-electrogenic) activity"/>
    <property type="evidence" value="ECO:0007669"/>
    <property type="project" value="UniProtKB-UniRule"/>
</dbReference>
<dbReference type="GO" id="GO:0048038">
    <property type="term" value="F:quinone binding"/>
    <property type="evidence" value="ECO:0007669"/>
    <property type="project" value="UniProtKB-KW"/>
</dbReference>
<dbReference type="GO" id="GO:0009060">
    <property type="term" value="P:aerobic respiration"/>
    <property type="evidence" value="ECO:0000318"/>
    <property type="project" value="GO_Central"/>
</dbReference>
<dbReference type="GO" id="GO:0015990">
    <property type="term" value="P:electron transport coupled proton transport"/>
    <property type="evidence" value="ECO:0000318"/>
    <property type="project" value="GO_Central"/>
</dbReference>
<dbReference type="FunFam" id="3.40.50.12280:FF:000002">
    <property type="entry name" value="NADH-quinone oxidoreductase subunit B"/>
    <property type="match status" value="1"/>
</dbReference>
<dbReference type="Gene3D" id="3.40.50.12280">
    <property type="match status" value="1"/>
</dbReference>
<dbReference type="HAMAP" id="MF_01356">
    <property type="entry name" value="NDH1_NuoB"/>
    <property type="match status" value="1"/>
</dbReference>
<dbReference type="InterPro" id="IPR006137">
    <property type="entry name" value="NADH_UbQ_OxRdtase-like_20kDa"/>
</dbReference>
<dbReference type="InterPro" id="IPR006138">
    <property type="entry name" value="NADH_UQ_OxRdtase_20Kd_su"/>
</dbReference>
<dbReference type="NCBIfam" id="TIGR01957">
    <property type="entry name" value="nuoB_fam"/>
    <property type="match status" value="1"/>
</dbReference>
<dbReference type="NCBIfam" id="NF005012">
    <property type="entry name" value="PRK06411.1"/>
    <property type="match status" value="1"/>
</dbReference>
<dbReference type="PANTHER" id="PTHR11995">
    <property type="entry name" value="NADH DEHYDROGENASE"/>
    <property type="match status" value="1"/>
</dbReference>
<dbReference type="PANTHER" id="PTHR11995:SF14">
    <property type="entry name" value="NADH DEHYDROGENASE [UBIQUINONE] IRON-SULFUR PROTEIN 7, MITOCHONDRIAL"/>
    <property type="match status" value="1"/>
</dbReference>
<dbReference type="Pfam" id="PF01058">
    <property type="entry name" value="Oxidored_q6"/>
    <property type="match status" value="1"/>
</dbReference>
<dbReference type="SUPFAM" id="SSF56770">
    <property type="entry name" value="HydA/Nqo6-like"/>
    <property type="match status" value="1"/>
</dbReference>
<feature type="chain" id="PRO_0000376396" description="NADH-quinone oxidoreductase subunit B 2">
    <location>
        <begin position="1"/>
        <end position="174"/>
    </location>
</feature>
<feature type="binding site" evidence="1">
    <location>
        <position position="51"/>
    </location>
    <ligand>
        <name>[4Fe-4S] cluster</name>
        <dbReference type="ChEBI" id="CHEBI:49883"/>
    </ligand>
</feature>
<feature type="binding site" evidence="1">
    <location>
        <position position="52"/>
    </location>
    <ligand>
        <name>[4Fe-4S] cluster</name>
        <dbReference type="ChEBI" id="CHEBI:49883"/>
    </ligand>
</feature>
<feature type="binding site" evidence="1">
    <location>
        <position position="116"/>
    </location>
    <ligand>
        <name>[4Fe-4S] cluster</name>
        <dbReference type="ChEBI" id="CHEBI:49883"/>
    </ligand>
</feature>
<feature type="binding site" evidence="1">
    <location>
        <position position="145"/>
    </location>
    <ligand>
        <name>[4Fe-4S] cluster</name>
        <dbReference type="ChEBI" id="CHEBI:49883"/>
    </ligand>
</feature>
<comment type="function">
    <text evidence="1">NDH-1 shuttles electrons from NADH, via FMN and iron-sulfur (Fe-S) centers, to quinones in the respiratory chain. The immediate electron acceptor for the enzyme in this species is believed to be ubiquinone. Couples the redox reaction to proton translocation (for every two electrons transferred, four hydrogen ions are translocated across the cytoplasmic membrane), and thus conserves the redox energy in a proton gradient.</text>
</comment>
<comment type="catalytic activity">
    <reaction evidence="1">
        <text>a quinone + NADH + 5 H(+)(in) = a quinol + NAD(+) + 4 H(+)(out)</text>
        <dbReference type="Rhea" id="RHEA:57888"/>
        <dbReference type="ChEBI" id="CHEBI:15378"/>
        <dbReference type="ChEBI" id="CHEBI:24646"/>
        <dbReference type="ChEBI" id="CHEBI:57540"/>
        <dbReference type="ChEBI" id="CHEBI:57945"/>
        <dbReference type="ChEBI" id="CHEBI:132124"/>
    </reaction>
</comment>
<comment type="cofactor">
    <cofactor evidence="1">
        <name>[4Fe-4S] cluster</name>
        <dbReference type="ChEBI" id="CHEBI:49883"/>
    </cofactor>
    <text evidence="1">Binds 1 [4Fe-4S] cluster.</text>
</comment>
<comment type="subunit">
    <text evidence="1">NDH-1 is composed of 14 different subunits. Subunits NuoB, C, D, E, F, and G constitute the peripheral sector of the complex.</text>
</comment>
<comment type="subcellular location">
    <subcellularLocation>
        <location evidence="1">Cell inner membrane</location>
        <topology evidence="1">Peripheral membrane protein</topology>
        <orientation evidence="1">Cytoplasmic side</orientation>
    </subcellularLocation>
</comment>
<comment type="similarity">
    <text evidence="1">Belongs to the complex I 20 kDa subunit family.</text>
</comment>
<proteinExistence type="inferred from homology"/>
<organism>
    <name type="scientific">Thermodesulfovibrio yellowstonii (strain ATCC 51303 / DSM 11347 / YP87)</name>
    <dbReference type="NCBI Taxonomy" id="289376"/>
    <lineage>
        <taxon>Bacteria</taxon>
        <taxon>Pseudomonadati</taxon>
        <taxon>Nitrospirota</taxon>
        <taxon>Thermodesulfovibrionia</taxon>
        <taxon>Thermodesulfovibrionales</taxon>
        <taxon>Thermodesulfovibrionaceae</taxon>
        <taxon>Thermodesulfovibrio</taxon>
    </lineage>
</organism>
<sequence length="174" mass="19216">MLPSTNDKQLIEVEEGTKIIKGSNVIITTLDKVVNWGRSNSLWPLTFGLACCAIEMMAAGASHLDLDRFGILFRASPRQADVIIIAGTVTYKMAPIVKRVYDQMPEPKYVIAMGSCACTGGIFNTYSTVQGADQFLPVDVYVPGCPPRPEALMYGVLKLKEKIMREEGRWGRLK</sequence>
<evidence type="ECO:0000255" key="1">
    <source>
        <dbReference type="HAMAP-Rule" id="MF_01356"/>
    </source>
</evidence>